<evidence type="ECO:0000255" key="1">
    <source>
        <dbReference type="HAMAP-Rule" id="MF_01629"/>
    </source>
</evidence>
<sequence length="213" mass="24408">MQPLSQIRREYSQGHLTEASLLADPYAQFDKWMADAVEAGLPDPTAMTVATVNSQGQPSQRIVLLKDVMDGCFVFYTNLGSRKAQDLLTNSKISLHFPWHILERQVLVRGSASLLPRQDVQHYFSSRPLSSQLAAWTSKQSQPIESRDALLSRFEDTKIKFSDKDIPAPEFWGGFKIIPQEIEFWQGGEHRLHDRFLFSRENSSNWSIQRLMP</sequence>
<dbReference type="EC" id="1.4.3.5" evidence="1"/>
<dbReference type="EMBL" id="CP000388">
    <property type="protein sequence ID" value="ABG41653.1"/>
    <property type="molecule type" value="Genomic_DNA"/>
</dbReference>
<dbReference type="RefSeq" id="WP_011575888.1">
    <property type="nucleotide sequence ID" value="NC_008228.1"/>
</dbReference>
<dbReference type="SMR" id="Q15R35"/>
<dbReference type="STRING" id="342610.Patl_3147"/>
<dbReference type="KEGG" id="pat:Patl_3147"/>
<dbReference type="eggNOG" id="COG0259">
    <property type="taxonomic scope" value="Bacteria"/>
</dbReference>
<dbReference type="HOGENOM" id="CLU_032263_2_2_6"/>
<dbReference type="OrthoDB" id="9780392at2"/>
<dbReference type="UniPathway" id="UPA01068">
    <property type="reaction ID" value="UER00304"/>
</dbReference>
<dbReference type="UniPathway" id="UPA01068">
    <property type="reaction ID" value="UER00305"/>
</dbReference>
<dbReference type="Proteomes" id="UP000001981">
    <property type="component" value="Chromosome"/>
</dbReference>
<dbReference type="GO" id="GO:0010181">
    <property type="term" value="F:FMN binding"/>
    <property type="evidence" value="ECO:0007669"/>
    <property type="project" value="UniProtKB-UniRule"/>
</dbReference>
<dbReference type="GO" id="GO:0004733">
    <property type="term" value="F:pyridoxamine phosphate oxidase activity"/>
    <property type="evidence" value="ECO:0007669"/>
    <property type="project" value="UniProtKB-UniRule"/>
</dbReference>
<dbReference type="GO" id="GO:0008615">
    <property type="term" value="P:pyridoxine biosynthetic process"/>
    <property type="evidence" value="ECO:0007669"/>
    <property type="project" value="UniProtKB-KW"/>
</dbReference>
<dbReference type="Gene3D" id="2.30.110.10">
    <property type="entry name" value="Electron Transport, Fmn-binding Protein, Chain A"/>
    <property type="match status" value="1"/>
</dbReference>
<dbReference type="HAMAP" id="MF_01629">
    <property type="entry name" value="PdxH"/>
    <property type="match status" value="1"/>
</dbReference>
<dbReference type="InterPro" id="IPR000659">
    <property type="entry name" value="Pyridox_Oxase"/>
</dbReference>
<dbReference type="InterPro" id="IPR019740">
    <property type="entry name" value="Pyridox_Oxase_CS"/>
</dbReference>
<dbReference type="InterPro" id="IPR011576">
    <property type="entry name" value="Pyridox_Oxase_N"/>
</dbReference>
<dbReference type="InterPro" id="IPR019576">
    <property type="entry name" value="Pyridoxamine_oxidase_dimer_C"/>
</dbReference>
<dbReference type="InterPro" id="IPR012349">
    <property type="entry name" value="Split_barrel_FMN-bd"/>
</dbReference>
<dbReference type="NCBIfam" id="TIGR00558">
    <property type="entry name" value="pdxH"/>
    <property type="match status" value="1"/>
</dbReference>
<dbReference type="NCBIfam" id="NF004231">
    <property type="entry name" value="PRK05679.1"/>
    <property type="match status" value="1"/>
</dbReference>
<dbReference type="PANTHER" id="PTHR10851:SF0">
    <property type="entry name" value="PYRIDOXINE-5'-PHOSPHATE OXIDASE"/>
    <property type="match status" value="1"/>
</dbReference>
<dbReference type="PANTHER" id="PTHR10851">
    <property type="entry name" value="PYRIDOXINE-5-PHOSPHATE OXIDASE"/>
    <property type="match status" value="1"/>
</dbReference>
<dbReference type="Pfam" id="PF10590">
    <property type="entry name" value="PNP_phzG_C"/>
    <property type="match status" value="1"/>
</dbReference>
<dbReference type="Pfam" id="PF01243">
    <property type="entry name" value="PNPOx_N"/>
    <property type="match status" value="1"/>
</dbReference>
<dbReference type="PIRSF" id="PIRSF000190">
    <property type="entry name" value="Pyd_amn-ph_oxd"/>
    <property type="match status" value="1"/>
</dbReference>
<dbReference type="SUPFAM" id="SSF50475">
    <property type="entry name" value="FMN-binding split barrel"/>
    <property type="match status" value="1"/>
</dbReference>
<dbReference type="PROSITE" id="PS01064">
    <property type="entry name" value="PYRIDOX_OXIDASE"/>
    <property type="match status" value="1"/>
</dbReference>
<reference key="1">
    <citation type="submission" date="2006-06" db="EMBL/GenBank/DDBJ databases">
        <title>Complete sequence of Pseudoalteromonas atlantica T6c.</title>
        <authorList>
            <consortium name="US DOE Joint Genome Institute"/>
            <person name="Copeland A."/>
            <person name="Lucas S."/>
            <person name="Lapidus A."/>
            <person name="Barry K."/>
            <person name="Detter J.C."/>
            <person name="Glavina del Rio T."/>
            <person name="Hammon N."/>
            <person name="Israni S."/>
            <person name="Dalin E."/>
            <person name="Tice H."/>
            <person name="Pitluck S."/>
            <person name="Saunders E."/>
            <person name="Brettin T."/>
            <person name="Bruce D."/>
            <person name="Han C."/>
            <person name="Tapia R."/>
            <person name="Gilna P."/>
            <person name="Schmutz J."/>
            <person name="Larimer F."/>
            <person name="Land M."/>
            <person name="Hauser L."/>
            <person name="Kyrpides N."/>
            <person name="Kim E."/>
            <person name="Karls A.C."/>
            <person name="Bartlett D."/>
            <person name="Higgins B.P."/>
            <person name="Richardson P."/>
        </authorList>
    </citation>
    <scope>NUCLEOTIDE SEQUENCE [LARGE SCALE GENOMIC DNA]</scope>
    <source>
        <strain>T6c / ATCC BAA-1087</strain>
    </source>
</reference>
<proteinExistence type="inferred from homology"/>
<feature type="chain" id="PRO_0000292315" description="Pyridoxine/pyridoxamine 5'-phosphate oxidase">
    <location>
        <begin position="1"/>
        <end position="213"/>
    </location>
</feature>
<feature type="binding site" evidence="1">
    <location>
        <begin position="8"/>
        <end position="11"/>
    </location>
    <ligand>
        <name>substrate</name>
    </ligand>
</feature>
<feature type="binding site" evidence="1">
    <location>
        <begin position="61"/>
        <end position="66"/>
    </location>
    <ligand>
        <name>FMN</name>
        <dbReference type="ChEBI" id="CHEBI:58210"/>
    </ligand>
</feature>
<feature type="binding site" evidence="1">
    <location>
        <position position="66"/>
    </location>
    <ligand>
        <name>substrate</name>
    </ligand>
</feature>
<feature type="binding site" evidence="1">
    <location>
        <begin position="76"/>
        <end position="77"/>
    </location>
    <ligand>
        <name>FMN</name>
        <dbReference type="ChEBI" id="CHEBI:58210"/>
    </ligand>
</feature>
<feature type="binding site" evidence="1">
    <location>
        <position position="82"/>
    </location>
    <ligand>
        <name>FMN</name>
        <dbReference type="ChEBI" id="CHEBI:58210"/>
    </ligand>
</feature>
<feature type="binding site" evidence="1">
    <location>
        <position position="83"/>
    </location>
    <ligand>
        <name>FMN</name>
        <dbReference type="ChEBI" id="CHEBI:58210"/>
    </ligand>
</feature>
<feature type="binding site" evidence="1">
    <location>
        <position position="105"/>
    </location>
    <ligand>
        <name>FMN</name>
        <dbReference type="ChEBI" id="CHEBI:58210"/>
    </ligand>
</feature>
<feature type="binding site" evidence="1">
    <location>
        <position position="123"/>
    </location>
    <ligand>
        <name>substrate</name>
    </ligand>
</feature>
<feature type="binding site" evidence="1">
    <location>
        <position position="127"/>
    </location>
    <ligand>
        <name>substrate</name>
    </ligand>
</feature>
<feature type="binding site" evidence="1">
    <location>
        <position position="131"/>
    </location>
    <ligand>
        <name>substrate</name>
    </ligand>
</feature>
<feature type="binding site" evidence="1">
    <location>
        <begin position="140"/>
        <end position="141"/>
    </location>
    <ligand>
        <name>FMN</name>
        <dbReference type="ChEBI" id="CHEBI:58210"/>
    </ligand>
</feature>
<feature type="binding site" evidence="1">
    <location>
        <position position="185"/>
    </location>
    <ligand>
        <name>FMN</name>
        <dbReference type="ChEBI" id="CHEBI:58210"/>
    </ligand>
</feature>
<feature type="binding site" evidence="1">
    <location>
        <begin position="191"/>
        <end position="193"/>
    </location>
    <ligand>
        <name>substrate</name>
    </ligand>
</feature>
<feature type="binding site" evidence="1">
    <location>
        <position position="195"/>
    </location>
    <ligand>
        <name>FMN</name>
        <dbReference type="ChEBI" id="CHEBI:58210"/>
    </ligand>
</feature>
<name>PDXH_PSEA6</name>
<accession>Q15R35</accession>
<keyword id="KW-0285">Flavoprotein</keyword>
<keyword id="KW-0288">FMN</keyword>
<keyword id="KW-0560">Oxidoreductase</keyword>
<keyword id="KW-0664">Pyridoxine biosynthesis</keyword>
<gene>
    <name evidence="1" type="primary">pdxH</name>
    <name type="ordered locus">Patl_3147</name>
</gene>
<protein>
    <recommendedName>
        <fullName evidence="1">Pyridoxine/pyridoxamine 5'-phosphate oxidase</fullName>
        <ecNumber evidence="1">1.4.3.5</ecNumber>
    </recommendedName>
    <alternativeName>
        <fullName evidence="1">PNP/PMP oxidase</fullName>
        <shortName evidence="1">PNPOx</shortName>
    </alternativeName>
    <alternativeName>
        <fullName evidence="1">Pyridoxal 5'-phosphate synthase</fullName>
    </alternativeName>
</protein>
<organism>
    <name type="scientific">Pseudoalteromonas atlantica (strain T6c / ATCC BAA-1087)</name>
    <dbReference type="NCBI Taxonomy" id="3042615"/>
    <lineage>
        <taxon>Bacteria</taxon>
        <taxon>Pseudomonadati</taxon>
        <taxon>Pseudomonadota</taxon>
        <taxon>Gammaproteobacteria</taxon>
        <taxon>Alteromonadales</taxon>
        <taxon>Alteromonadaceae</taxon>
        <taxon>Paraglaciecola</taxon>
    </lineage>
</organism>
<comment type="function">
    <text evidence="1">Catalyzes the oxidation of either pyridoxine 5'-phosphate (PNP) or pyridoxamine 5'-phosphate (PMP) into pyridoxal 5'-phosphate (PLP).</text>
</comment>
<comment type="catalytic activity">
    <reaction evidence="1">
        <text>pyridoxamine 5'-phosphate + O2 + H2O = pyridoxal 5'-phosphate + H2O2 + NH4(+)</text>
        <dbReference type="Rhea" id="RHEA:15817"/>
        <dbReference type="ChEBI" id="CHEBI:15377"/>
        <dbReference type="ChEBI" id="CHEBI:15379"/>
        <dbReference type="ChEBI" id="CHEBI:16240"/>
        <dbReference type="ChEBI" id="CHEBI:28938"/>
        <dbReference type="ChEBI" id="CHEBI:58451"/>
        <dbReference type="ChEBI" id="CHEBI:597326"/>
        <dbReference type="EC" id="1.4.3.5"/>
    </reaction>
</comment>
<comment type="catalytic activity">
    <reaction evidence="1">
        <text>pyridoxine 5'-phosphate + O2 = pyridoxal 5'-phosphate + H2O2</text>
        <dbReference type="Rhea" id="RHEA:15149"/>
        <dbReference type="ChEBI" id="CHEBI:15379"/>
        <dbReference type="ChEBI" id="CHEBI:16240"/>
        <dbReference type="ChEBI" id="CHEBI:58589"/>
        <dbReference type="ChEBI" id="CHEBI:597326"/>
        <dbReference type="EC" id="1.4.3.5"/>
    </reaction>
</comment>
<comment type="cofactor">
    <cofactor evidence="1">
        <name>FMN</name>
        <dbReference type="ChEBI" id="CHEBI:58210"/>
    </cofactor>
    <text evidence="1">Binds 1 FMN per subunit.</text>
</comment>
<comment type="pathway">
    <text evidence="1">Cofactor metabolism; pyridoxal 5'-phosphate salvage; pyridoxal 5'-phosphate from pyridoxamine 5'-phosphate: step 1/1.</text>
</comment>
<comment type="pathway">
    <text evidence="1">Cofactor metabolism; pyridoxal 5'-phosphate salvage; pyridoxal 5'-phosphate from pyridoxine 5'-phosphate: step 1/1.</text>
</comment>
<comment type="subunit">
    <text evidence="1">Homodimer.</text>
</comment>
<comment type="similarity">
    <text evidence="1">Belongs to the pyridoxamine 5'-phosphate oxidase family.</text>
</comment>